<name>AROB_PASMU</name>
<organism>
    <name type="scientific">Pasteurella multocida (strain Pm70)</name>
    <dbReference type="NCBI Taxonomy" id="272843"/>
    <lineage>
        <taxon>Bacteria</taxon>
        <taxon>Pseudomonadati</taxon>
        <taxon>Pseudomonadota</taxon>
        <taxon>Gammaproteobacteria</taxon>
        <taxon>Pasteurellales</taxon>
        <taxon>Pasteurellaceae</taxon>
        <taxon>Pasteurella</taxon>
    </lineage>
</organism>
<proteinExistence type="inferred from homology"/>
<evidence type="ECO:0000255" key="1">
    <source>
        <dbReference type="HAMAP-Rule" id="MF_00110"/>
    </source>
</evidence>
<evidence type="ECO:0000305" key="2"/>
<dbReference type="EC" id="4.2.3.4" evidence="1"/>
<dbReference type="EMBL" id="AE004439">
    <property type="protein sequence ID" value="AAK03307.1"/>
    <property type="molecule type" value="Genomic_DNA"/>
</dbReference>
<dbReference type="RefSeq" id="WP_010907081.1">
    <property type="nucleotide sequence ID" value="NC_002663.1"/>
</dbReference>
<dbReference type="SMR" id="P57924"/>
<dbReference type="STRING" id="272843.PM1223"/>
<dbReference type="EnsemblBacteria" id="AAK03307">
    <property type="protein sequence ID" value="AAK03307"/>
    <property type="gene ID" value="PM1223"/>
</dbReference>
<dbReference type="KEGG" id="pmu:PM1223"/>
<dbReference type="PATRIC" id="fig|272843.6.peg.1233"/>
<dbReference type="HOGENOM" id="CLU_001201_0_2_6"/>
<dbReference type="OrthoDB" id="9806583at2"/>
<dbReference type="UniPathway" id="UPA00053">
    <property type="reaction ID" value="UER00085"/>
</dbReference>
<dbReference type="Proteomes" id="UP000000809">
    <property type="component" value="Chromosome"/>
</dbReference>
<dbReference type="GO" id="GO:0005737">
    <property type="term" value="C:cytoplasm"/>
    <property type="evidence" value="ECO:0007669"/>
    <property type="project" value="UniProtKB-SubCell"/>
</dbReference>
<dbReference type="GO" id="GO:0003856">
    <property type="term" value="F:3-dehydroquinate synthase activity"/>
    <property type="evidence" value="ECO:0007669"/>
    <property type="project" value="UniProtKB-UniRule"/>
</dbReference>
<dbReference type="GO" id="GO:0046872">
    <property type="term" value="F:metal ion binding"/>
    <property type="evidence" value="ECO:0007669"/>
    <property type="project" value="UniProtKB-KW"/>
</dbReference>
<dbReference type="GO" id="GO:0000166">
    <property type="term" value="F:nucleotide binding"/>
    <property type="evidence" value="ECO:0007669"/>
    <property type="project" value="UniProtKB-KW"/>
</dbReference>
<dbReference type="GO" id="GO:0008652">
    <property type="term" value="P:amino acid biosynthetic process"/>
    <property type="evidence" value="ECO:0007669"/>
    <property type="project" value="UniProtKB-KW"/>
</dbReference>
<dbReference type="GO" id="GO:0009073">
    <property type="term" value="P:aromatic amino acid family biosynthetic process"/>
    <property type="evidence" value="ECO:0007669"/>
    <property type="project" value="UniProtKB-KW"/>
</dbReference>
<dbReference type="GO" id="GO:0009423">
    <property type="term" value="P:chorismate biosynthetic process"/>
    <property type="evidence" value="ECO:0007669"/>
    <property type="project" value="UniProtKB-UniRule"/>
</dbReference>
<dbReference type="CDD" id="cd08195">
    <property type="entry name" value="DHQS"/>
    <property type="match status" value="1"/>
</dbReference>
<dbReference type="FunFam" id="1.20.1090.10:FF:000002">
    <property type="entry name" value="3-dehydroquinate synthase"/>
    <property type="match status" value="1"/>
</dbReference>
<dbReference type="FunFam" id="3.40.50.1970:FF:000001">
    <property type="entry name" value="3-dehydroquinate synthase"/>
    <property type="match status" value="1"/>
</dbReference>
<dbReference type="Gene3D" id="3.40.50.1970">
    <property type="match status" value="1"/>
</dbReference>
<dbReference type="Gene3D" id="1.20.1090.10">
    <property type="entry name" value="Dehydroquinate synthase-like - alpha domain"/>
    <property type="match status" value="1"/>
</dbReference>
<dbReference type="HAMAP" id="MF_00110">
    <property type="entry name" value="DHQ_synthase"/>
    <property type="match status" value="1"/>
</dbReference>
<dbReference type="InterPro" id="IPR050071">
    <property type="entry name" value="Dehydroquinate_synthase"/>
</dbReference>
<dbReference type="InterPro" id="IPR016037">
    <property type="entry name" value="DHQ_synth_AroB"/>
</dbReference>
<dbReference type="InterPro" id="IPR030963">
    <property type="entry name" value="DHQ_synth_fam"/>
</dbReference>
<dbReference type="InterPro" id="IPR030960">
    <property type="entry name" value="DHQS/DOIS_N"/>
</dbReference>
<dbReference type="InterPro" id="IPR056179">
    <property type="entry name" value="DHQS_C"/>
</dbReference>
<dbReference type="NCBIfam" id="TIGR01357">
    <property type="entry name" value="aroB"/>
    <property type="match status" value="1"/>
</dbReference>
<dbReference type="PANTHER" id="PTHR43622">
    <property type="entry name" value="3-DEHYDROQUINATE SYNTHASE"/>
    <property type="match status" value="1"/>
</dbReference>
<dbReference type="PANTHER" id="PTHR43622:SF7">
    <property type="entry name" value="3-DEHYDROQUINATE SYNTHASE, CHLOROPLASTIC"/>
    <property type="match status" value="1"/>
</dbReference>
<dbReference type="Pfam" id="PF01761">
    <property type="entry name" value="DHQ_synthase"/>
    <property type="match status" value="1"/>
</dbReference>
<dbReference type="Pfam" id="PF24621">
    <property type="entry name" value="DHQS_C"/>
    <property type="match status" value="1"/>
</dbReference>
<dbReference type="PIRSF" id="PIRSF001455">
    <property type="entry name" value="DHQ_synth"/>
    <property type="match status" value="1"/>
</dbReference>
<dbReference type="SUPFAM" id="SSF56796">
    <property type="entry name" value="Dehydroquinate synthase-like"/>
    <property type="match status" value="1"/>
</dbReference>
<accession>P57924</accession>
<protein>
    <recommendedName>
        <fullName evidence="1">3-dehydroquinate synthase</fullName>
        <shortName evidence="1">DHQS</shortName>
        <ecNumber evidence="1">4.2.3.4</ecNumber>
    </recommendedName>
</protein>
<reference key="1">
    <citation type="journal article" date="2001" name="Proc. Natl. Acad. Sci. U.S.A.">
        <title>Complete genomic sequence of Pasteurella multocida Pm70.</title>
        <authorList>
            <person name="May B.J."/>
            <person name="Zhang Q."/>
            <person name="Li L.L."/>
            <person name="Paustian M.L."/>
            <person name="Whittam T.S."/>
            <person name="Kapur V."/>
        </authorList>
    </citation>
    <scope>NUCLEOTIDE SEQUENCE [LARGE SCALE GENOMIC DNA]</scope>
    <source>
        <strain>Pm70</strain>
    </source>
</reference>
<comment type="function">
    <text evidence="1">Catalyzes the conversion of 3-deoxy-D-arabino-heptulosonate 7-phosphate (DAHP) to dehydroquinate (DHQ).</text>
</comment>
<comment type="catalytic activity">
    <reaction evidence="1">
        <text>7-phospho-2-dehydro-3-deoxy-D-arabino-heptonate = 3-dehydroquinate + phosphate</text>
        <dbReference type="Rhea" id="RHEA:21968"/>
        <dbReference type="ChEBI" id="CHEBI:32364"/>
        <dbReference type="ChEBI" id="CHEBI:43474"/>
        <dbReference type="ChEBI" id="CHEBI:58394"/>
        <dbReference type="EC" id="4.2.3.4"/>
    </reaction>
</comment>
<comment type="cofactor">
    <cofactor evidence="1">
        <name>NAD(+)</name>
        <dbReference type="ChEBI" id="CHEBI:57540"/>
    </cofactor>
</comment>
<comment type="cofactor">
    <cofactor evidence="1">
        <name>Co(2+)</name>
        <dbReference type="ChEBI" id="CHEBI:48828"/>
    </cofactor>
    <cofactor evidence="1">
        <name>Zn(2+)</name>
        <dbReference type="ChEBI" id="CHEBI:29105"/>
    </cofactor>
    <text evidence="1">Binds 1 divalent metal cation per subunit. Can use either Co(2+) or Zn(2+).</text>
</comment>
<comment type="pathway">
    <text evidence="1">Metabolic intermediate biosynthesis; chorismate biosynthesis; chorismate from D-erythrose 4-phosphate and phosphoenolpyruvate: step 2/7.</text>
</comment>
<comment type="subcellular location">
    <subcellularLocation>
        <location evidence="1">Cytoplasm</location>
    </subcellularLocation>
</comment>
<comment type="similarity">
    <text evidence="1 2">Belongs to the sugar phosphate cyclases superfamily. Dehydroquinate synthase family.</text>
</comment>
<feature type="chain" id="PRO_0000140763" description="3-dehydroquinate synthase">
    <location>
        <begin position="1"/>
        <end position="362"/>
    </location>
</feature>
<feature type="binding site" evidence="1">
    <location>
        <begin position="70"/>
        <end position="75"/>
    </location>
    <ligand>
        <name>NAD(+)</name>
        <dbReference type="ChEBI" id="CHEBI:57540"/>
    </ligand>
</feature>
<feature type="binding site" evidence="1">
    <location>
        <begin position="104"/>
        <end position="108"/>
    </location>
    <ligand>
        <name>NAD(+)</name>
        <dbReference type="ChEBI" id="CHEBI:57540"/>
    </ligand>
</feature>
<feature type="binding site" evidence="1">
    <location>
        <begin position="128"/>
        <end position="129"/>
    </location>
    <ligand>
        <name>NAD(+)</name>
        <dbReference type="ChEBI" id="CHEBI:57540"/>
    </ligand>
</feature>
<feature type="binding site" evidence="1">
    <location>
        <position position="141"/>
    </location>
    <ligand>
        <name>NAD(+)</name>
        <dbReference type="ChEBI" id="CHEBI:57540"/>
    </ligand>
</feature>
<feature type="binding site" evidence="1">
    <location>
        <position position="150"/>
    </location>
    <ligand>
        <name>NAD(+)</name>
        <dbReference type="ChEBI" id="CHEBI:57540"/>
    </ligand>
</feature>
<feature type="binding site" evidence="1">
    <location>
        <position position="183"/>
    </location>
    <ligand>
        <name>Zn(2+)</name>
        <dbReference type="ChEBI" id="CHEBI:29105"/>
    </ligand>
</feature>
<feature type="binding site" evidence="1">
    <location>
        <position position="246"/>
    </location>
    <ligand>
        <name>Zn(2+)</name>
        <dbReference type="ChEBI" id="CHEBI:29105"/>
    </ligand>
</feature>
<feature type="binding site" evidence="1">
    <location>
        <position position="263"/>
    </location>
    <ligand>
        <name>Zn(2+)</name>
        <dbReference type="ChEBI" id="CHEBI:29105"/>
    </ligand>
</feature>
<keyword id="KW-0028">Amino-acid biosynthesis</keyword>
<keyword id="KW-0057">Aromatic amino acid biosynthesis</keyword>
<keyword id="KW-0170">Cobalt</keyword>
<keyword id="KW-0963">Cytoplasm</keyword>
<keyword id="KW-0456">Lyase</keyword>
<keyword id="KW-0479">Metal-binding</keyword>
<keyword id="KW-0520">NAD</keyword>
<keyword id="KW-0547">Nucleotide-binding</keyword>
<keyword id="KW-1185">Reference proteome</keyword>
<keyword id="KW-0862">Zinc</keyword>
<sequence>MLCVNVELKERRYPIYIGSGLLSDEKCYPLKSGDKVMIVTNPTIAQYYLSQVTDTLVKKGCLVEHVVLSDGEQYKTLDSLNLIFTALLQGNHGRDTTIIALGGGVIGDVAGYAAASYQRGVRFIQIPTTLLAQVDSSVGGKTAVNHALGKNMIGAFYQPCTVIIDTLTLNSLPKREINAGLAEVIKYGAILDLPFFTWLEQNIDSLVARDPDNLQTCIARCCQIKADVVARDETEKGDRALLNLGHTFGHAIETHLGYGHWLHGEAVAVGMLMAAVLSEKLGNLTKTDVARLERLLARANLPTVSPDTMQPEDYLPHMLRDKKVLAGKLRLVLLASLGQAYVATDTDPALVLDAIRCCTQVN</sequence>
<gene>
    <name evidence="1" type="primary">aroB</name>
    <name type="ordered locus">PM1223</name>
</gene>